<dbReference type="EMBL" id="BX571965">
    <property type="protein sequence ID" value="CAH36160.1"/>
    <property type="molecule type" value="Genomic_DNA"/>
</dbReference>
<dbReference type="RefSeq" id="WP_004197087.1">
    <property type="nucleotide sequence ID" value="NZ_CP009538.1"/>
</dbReference>
<dbReference type="RefSeq" id="YP_108753.1">
    <property type="nucleotide sequence ID" value="NC_006350.1"/>
</dbReference>
<dbReference type="SMR" id="Q63T13"/>
<dbReference type="STRING" id="272560.BPSL2158"/>
<dbReference type="GeneID" id="93060699"/>
<dbReference type="KEGG" id="bps:BPSL2158"/>
<dbReference type="PATRIC" id="fig|272560.51.peg.3294"/>
<dbReference type="eggNOG" id="COG0264">
    <property type="taxonomic scope" value="Bacteria"/>
</dbReference>
<dbReference type="Proteomes" id="UP000000605">
    <property type="component" value="Chromosome 1"/>
</dbReference>
<dbReference type="GO" id="GO:0005737">
    <property type="term" value="C:cytoplasm"/>
    <property type="evidence" value="ECO:0007669"/>
    <property type="project" value="UniProtKB-SubCell"/>
</dbReference>
<dbReference type="GO" id="GO:0003746">
    <property type="term" value="F:translation elongation factor activity"/>
    <property type="evidence" value="ECO:0007669"/>
    <property type="project" value="UniProtKB-UniRule"/>
</dbReference>
<dbReference type="CDD" id="cd14275">
    <property type="entry name" value="UBA_EF-Ts"/>
    <property type="match status" value="1"/>
</dbReference>
<dbReference type="FunFam" id="1.10.286.20:FF:000001">
    <property type="entry name" value="Elongation factor Ts"/>
    <property type="match status" value="1"/>
</dbReference>
<dbReference type="FunFam" id="1.10.8.10:FF:000001">
    <property type="entry name" value="Elongation factor Ts"/>
    <property type="match status" value="1"/>
</dbReference>
<dbReference type="Gene3D" id="1.10.286.20">
    <property type="match status" value="1"/>
</dbReference>
<dbReference type="Gene3D" id="1.10.8.10">
    <property type="entry name" value="DNA helicase RuvA subunit, C-terminal domain"/>
    <property type="match status" value="1"/>
</dbReference>
<dbReference type="Gene3D" id="3.30.479.20">
    <property type="entry name" value="Elongation factor Ts, dimerisation domain"/>
    <property type="match status" value="2"/>
</dbReference>
<dbReference type="HAMAP" id="MF_00050">
    <property type="entry name" value="EF_Ts"/>
    <property type="match status" value="1"/>
</dbReference>
<dbReference type="InterPro" id="IPR036402">
    <property type="entry name" value="EF-Ts_dimer_sf"/>
</dbReference>
<dbReference type="InterPro" id="IPR001816">
    <property type="entry name" value="Transl_elong_EFTs/EF1B"/>
</dbReference>
<dbReference type="InterPro" id="IPR014039">
    <property type="entry name" value="Transl_elong_EFTs/EF1B_dimer"/>
</dbReference>
<dbReference type="InterPro" id="IPR018101">
    <property type="entry name" value="Transl_elong_Ts_CS"/>
</dbReference>
<dbReference type="InterPro" id="IPR009060">
    <property type="entry name" value="UBA-like_sf"/>
</dbReference>
<dbReference type="NCBIfam" id="TIGR00116">
    <property type="entry name" value="tsf"/>
    <property type="match status" value="1"/>
</dbReference>
<dbReference type="PANTHER" id="PTHR11741">
    <property type="entry name" value="ELONGATION FACTOR TS"/>
    <property type="match status" value="1"/>
</dbReference>
<dbReference type="PANTHER" id="PTHR11741:SF0">
    <property type="entry name" value="ELONGATION FACTOR TS, MITOCHONDRIAL"/>
    <property type="match status" value="1"/>
</dbReference>
<dbReference type="Pfam" id="PF00889">
    <property type="entry name" value="EF_TS"/>
    <property type="match status" value="1"/>
</dbReference>
<dbReference type="SUPFAM" id="SSF54713">
    <property type="entry name" value="Elongation factor Ts (EF-Ts), dimerisation domain"/>
    <property type="match status" value="2"/>
</dbReference>
<dbReference type="SUPFAM" id="SSF46934">
    <property type="entry name" value="UBA-like"/>
    <property type="match status" value="1"/>
</dbReference>
<dbReference type="PROSITE" id="PS01127">
    <property type="entry name" value="EF_TS_2"/>
    <property type="match status" value="1"/>
</dbReference>
<evidence type="ECO:0000255" key="1">
    <source>
        <dbReference type="HAMAP-Rule" id="MF_00050"/>
    </source>
</evidence>
<gene>
    <name evidence="1" type="primary">tsf</name>
    <name type="ordered locus">BPSL2158</name>
</gene>
<organism>
    <name type="scientific">Burkholderia pseudomallei (strain K96243)</name>
    <dbReference type="NCBI Taxonomy" id="272560"/>
    <lineage>
        <taxon>Bacteria</taxon>
        <taxon>Pseudomonadati</taxon>
        <taxon>Pseudomonadota</taxon>
        <taxon>Betaproteobacteria</taxon>
        <taxon>Burkholderiales</taxon>
        <taxon>Burkholderiaceae</taxon>
        <taxon>Burkholderia</taxon>
        <taxon>pseudomallei group</taxon>
    </lineage>
</organism>
<sequence length="293" mass="31193">MAAITASMVAELRAKTDAPMMECKKALTEADGDMAKAEELLRVKLGNKASKAASRVTAEGVVASFVGANAGALVELNCETDFVAKNDDFNAFAKTVAELVATQNPADVAALSALPLDGKTVDEVRLALVGKIGENISIRRFVRFETSNKLATYLHGSRIGVIVEYTGAQEQVGKDVAMHVAAMKPVSLSADEVPADLIEKERRVAEQKAAESGKPAEIVAKMVDGSVQKFLKEVSLLNQPFVKNDKQTIEQMLKAADAAVQKFALFVVGEGIEKRQDDFAAEVAAQVAAAKQQ</sequence>
<accession>Q63T13</accession>
<proteinExistence type="inferred from homology"/>
<protein>
    <recommendedName>
        <fullName evidence="1">Elongation factor Ts</fullName>
        <shortName evidence="1">EF-Ts</shortName>
    </recommendedName>
</protein>
<feature type="chain" id="PRO_0000161096" description="Elongation factor Ts">
    <location>
        <begin position="1"/>
        <end position="293"/>
    </location>
</feature>
<feature type="region of interest" description="Involved in Mg(2+) ion dislocation from EF-Tu" evidence="1">
    <location>
        <begin position="80"/>
        <end position="83"/>
    </location>
</feature>
<keyword id="KW-0963">Cytoplasm</keyword>
<keyword id="KW-0251">Elongation factor</keyword>
<keyword id="KW-0648">Protein biosynthesis</keyword>
<keyword id="KW-1185">Reference proteome</keyword>
<reference key="1">
    <citation type="journal article" date="2004" name="Proc. Natl. Acad. Sci. U.S.A.">
        <title>Genomic plasticity of the causative agent of melioidosis, Burkholderia pseudomallei.</title>
        <authorList>
            <person name="Holden M.T.G."/>
            <person name="Titball R.W."/>
            <person name="Peacock S.J."/>
            <person name="Cerdeno-Tarraga A.-M."/>
            <person name="Atkins T."/>
            <person name="Crossman L.C."/>
            <person name="Pitt T."/>
            <person name="Churcher C."/>
            <person name="Mungall K.L."/>
            <person name="Bentley S.D."/>
            <person name="Sebaihia M."/>
            <person name="Thomson N.R."/>
            <person name="Bason N."/>
            <person name="Beacham I.R."/>
            <person name="Brooks K."/>
            <person name="Brown K.A."/>
            <person name="Brown N.F."/>
            <person name="Challis G.L."/>
            <person name="Cherevach I."/>
            <person name="Chillingworth T."/>
            <person name="Cronin A."/>
            <person name="Crossett B."/>
            <person name="Davis P."/>
            <person name="DeShazer D."/>
            <person name="Feltwell T."/>
            <person name="Fraser A."/>
            <person name="Hance Z."/>
            <person name="Hauser H."/>
            <person name="Holroyd S."/>
            <person name="Jagels K."/>
            <person name="Keith K.E."/>
            <person name="Maddison M."/>
            <person name="Moule S."/>
            <person name="Price C."/>
            <person name="Quail M.A."/>
            <person name="Rabbinowitsch E."/>
            <person name="Rutherford K."/>
            <person name="Sanders M."/>
            <person name="Simmonds M."/>
            <person name="Songsivilai S."/>
            <person name="Stevens K."/>
            <person name="Tumapa S."/>
            <person name="Vesaratchavest M."/>
            <person name="Whitehead S."/>
            <person name="Yeats C."/>
            <person name="Barrell B.G."/>
            <person name="Oyston P.C.F."/>
            <person name="Parkhill J."/>
        </authorList>
    </citation>
    <scope>NUCLEOTIDE SEQUENCE [LARGE SCALE GENOMIC DNA]</scope>
    <source>
        <strain>K96243</strain>
    </source>
</reference>
<comment type="function">
    <text evidence="1">Associates with the EF-Tu.GDP complex and induces the exchange of GDP to GTP. It remains bound to the aminoacyl-tRNA.EF-Tu.GTP complex up to the GTP hydrolysis stage on the ribosome.</text>
</comment>
<comment type="subcellular location">
    <subcellularLocation>
        <location evidence="1">Cytoplasm</location>
    </subcellularLocation>
</comment>
<comment type="similarity">
    <text evidence="1">Belongs to the EF-Ts family.</text>
</comment>
<name>EFTS_BURPS</name>